<keyword id="KW-0963">Cytoplasm</keyword>
<keyword id="KW-0342">GTP-binding</keyword>
<keyword id="KW-0396">Initiation factor</keyword>
<keyword id="KW-0547">Nucleotide-binding</keyword>
<keyword id="KW-0648">Protein biosynthesis</keyword>
<dbReference type="EMBL" id="CP000083">
    <property type="protein sequence ID" value="AAZ24660.1"/>
    <property type="molecule type" value="Genomic_DNA"/>
</dbReference>
<dbReference type="RefSeq" id="WP_011043022.1">
    <property type="nucleotide sequence ID" value="NC_003910.7"/>
</dbReference>
<dbReference type="SMR" id="Q482T9"/>
<dbReference type="STRING" id="167879.CPS_2203"/>
<dbReference type="KEGG" id="cps:CPS_2203"/>
<dbReference type="eggNOG" id="COG0532">
    <property type="taxonomic scope" value="Bacteria"/>
</dbReference>
<dbReference type="HOGENOM" id="CLU_006301_6_3_6"/>
<dbReference type="Proteomes" id="UP000000547">
    <property type="component" value="Chromosome"/>
</dbReference>
<dbReference type="GO" id="GO:0005829">
    <property type="term" value="C:cytosol"/>
    <property type="evidence" value="ECO:0007669"/>
    <property type="project" value="TreeGrafter"/>
</dbReference>
<dbReference type="GO" id="GO:0005525">
    <property type="term" value="F:GTP binding"/>
    <property type="evidence" value="ECO:0007669"/>
    <property type="project" value="UniProtKB-KW"/>
</dbReference>
<dbReference type="GO" id="GO:0003924">
    <property type="term" value="F:GTPase activity"/>
    <property type="evidence" value="ECO:0007669"/>
    <property type="project" value="UniProtKB-UniRule"/>
</dbReference>
<dbReference type="GO" id="GO:0097216">
    <property type="term" value="F:guanosine tetraphosphate binding"/>
    <property type="evidence" value="ECO:0007669"/>
    <property type="project" value="UniProtKB-ARBA"/>
</dbReference>
<dbReference type="GO" id="GO:0003743">
    <property type="term" value="F:translation initiation factor activity"/>
    <property type="evidence" value="ECO:0007669"/>
    <property type="project" value="UniProtKB-UniRule"/>
</dbReference>
<dbReference type="CDD" id="cd01887">
    <property type="entry name" value="IF2_eIF5B"/>
    <property type="match status" value="1"/>
</dbReference>
<dbReference type="CDD" id="cd03702">
    <property type="entry name" value="IF2_mtIF2_II"/>
    <property type="match status" value="1"/>
</dbReference>
<dbReference type="CDD" id="cd03692">
    <property type="entry name" value="mtIF2_IVc"/>
    <property type="match status" value="1"/>
</dbReference>
<dbReference type="FunFam" id="2.40.30.10:FF:000007">
    <property type="entry name" value="Translation initiation factor IF-2"/>
    <property type="match status" value="1"/>
</dbReference>
<dbReference type="FunFam" id="2.40.30.10:FF:000008">
    <property type="entry name" value="Translation initiation factor IF-2"/>
    <property type="match status" value="1"/>
</dbReference>
<dbReference type="FunFam" id="3.40.50.10050:FF:000001">
    <property type="entry name" value="Translation initiation factor IF-2"/>
    <property type="match status" value="1"/>
</dbReference>
<dbReference type="FunFam" id="3.40.50.300:FF:000019">
    <property type="entry name" value="Translation initiation factor IF-2"/>
    <property type="match status" value="1"/>
</dbReference>
<dbReference type="Gene3D" id="3.40.50.300">
    <property type="entry name" value="P-loop containing nucleotide triphosphate hydrolases"/>
    <property type="match status" value="1"/>
</dbReference>
<dbReference type="Gene3D" id="3.30.56.50">
    <property type="entry name" value="Putative DNA-binding domain, N-terminal subdomain of bacterial translation initiation factor IF2"/>
    <property type="match status" value="1"/>
</dbReference>
<dbReference type="Gene3D" id="2.40.30.10">
    <property type="entry name" value="Translation factors"/>
    <property type="match status" value="2"/>
</dbReference>
<dbReference type="Gene3D" id="3.40.50.10050">
    <property type="entry name" value="Translation initiation factor IF- 2, domain 3"/>
    <property type="match status" value="1"/>
</dbReference>
<dbReference type="HAMAP" id="MF_00100_B">
    <property type="entry name" value="IF_2_B"/>
    <property type="match status" value="1"/>
</dbReference>
<dbReference type="InterPro" id="IPR009061">
    <property type="entry name" value="DNA-bd_dom_put_sf"/>
</dbReference>
<dbReference type="InterPro" id="IPR053905">
    <property type="entry name" value="EF-G-like_DII"/>
</dbReference>
<dbReference type="InterPro" id="IPR004161">
    <property type="entry name" value="EFTu-like_2"/>
</dbReference>
<dbReference type="InterPro" id="IPR013575">
    <property type="entry name" value="IF2_assoc_dom_bac"/>
</dbReference>
<dbReference type="InterPro" id="IPR044145">
    <property type="entry name" value="IF2_II"/>
</dbReference>
<dbReference type="InterPro" id="IPR006847">
    <property type="entry name" value="IF2_N"/>
</dbReference>
<dbReference type="InterPro" id="IPR027417">
    <property type="entry name" value="P-loop_NTPase"/>
</dbReference>
<dbReference type="InterPro" id="IPR005225">
    <property type="entry name" value="Small_GTP-bd"/>
</dbReference>
<dbReference type="InterPro" id="IPR000795">
    <property type="entry name" value="T_Tr_GTP-bd_dom"/>
</dbReference>
<dbReference type="InterPro" id="IPR000178">
    <property type="entry name" value="TF_IF2_bacterial-like"/>
</dbReference>
<dbReference type="InterPro" id="IPR015760">
    <property type="entry name" value="TIF_IF2"/>
</dbReference>
<dbReference type="InterPro" id="IPR023115">
    <property type="entry name" value="TIF_IF2_dom3"/>
</dbReference>
<dbReference type="InterPro" id="IPR036925">
    <property type="entry name" value="TIF_IF2_dom3_sf"/>
</dbReference>
<dbReference type="InterPro" id="IPR009000">
    <property type="entry name" value="Transl_B-barrel_sf"/>
</dbReference>
<dbReference type="NCBIfam" id="TIGR00487">
    <property type="entry name" value="IF-2"/>
    <property type="match status" value="1"/>
</dbReference>
<dbReference type="NCBIfam" id="TIGR00231">
    <property type="entry name" value="small_GTP"/>
    <property type="match status" value="1"/>
</dbReference>
<dbReference type="PANTHER" id="PTHR43381:SF5">
    <property type="entry name" value="TR-TYPE G DOMAIN-CONTAINING PROTEIN"/>
    <property type="match status" value="1"/>
</dbReference>
<dbReference type="PANTHER" id="PTHR43381">
    <property type="entry name" value="TRANSLATION INITIATION FACTOR IF-2-RELATED"/>
    <property type="match status" value="1"/>
</dbReference>
<dbReference type="Pfam" id="PF22042">
    <property type="entry name" value="EF-G_D2"/>
    <property type="match status" value="1"/>
</dbReference>
<dbReference type="Pfam" id="PF00009">
    <property type="entry name" value="GTP_EFTU"/>
    <property type="match status" value="1"/>
</dbReference>
<dbReference type="Pfam" id="PF03144">
    <property type="entry name" value="GTP_EFTU_D2"/>
    <property type="match status" value="1"/>
</dbReference>
<dbReference type="Pfam" id="PF11987">
    <property type="entry name" value="IF-2"/>
    <property type="match status" value="1"/>
</dbReference>
<dbReference type="Pfam" id="PF08364">
    <property type="entry name" value="IF2_assoc"/>
    <property type="match status" value="1"/>
</dbReference>
<dbReference type="Pfam" id="PF04760">
    <property type="entry name" value="IF2_N"/>
    <property type="match status" value="2"/>
</dbReference>
<dbReference type="SUPFAM" id="SSF52156">
    <property type="entry name" value="Initiation factor IF2/eIF5b, domain 3"/>
    <property type="match status" value="1"/>
</dbReference>
<dbReference type="SUPFAM" id="SSF52540">
    <property type="entry name" value="P-loop containing nucleoside triphosphate hydrolases"/>
    <property type="match status" value="1"/>
</dbReference>
<dbReference type="SUPFAM" id="SSF46955">
    <property type="entry name" value="Putative DNA-binding domain"/>
    <property type="match status" value="1"/>
</dbReference>
<dbReference type="SUPFAM" id="SSF50447">
    <property type="entry name" value="Translation proteins"/>
    <property type="match status" value="2"/>
</dbReference>
<dbReference type="PROSITE" id="PS51722">
    <property type="entry name" value="G_TR_2"/>
    <property type="match status" value="1"/>
</dbReference>
<dbReference type="PROSITE" id="PS01176">
    <property type="entry name" value="IF2"/>
    <property type="match status" value="1"/>
</dbReference>
<feature type="chain" id="PRO_0000228185" description="Translation initiation factor IF-2">
    <location>
        <begin position="1"/>
        <end position="889"/>
    </location>
</feature>
<feature type="domain" description="tr-type G">
    <location>
        <begin position="389"/>
        <end position="558"/>
    </location>
</feature>
<feature type="region of interest" description="Disordered" evidence="3">
    <location>
        <begin position="47"/>
        <end position="85"/>
    </location>
</feature>
<feature type="region of interest" description="Disordered" evidence="3">
    <location>
        <begin position="206"/>
        <end position="302"/>
    </location>
</feature>
<feature type="region of interest" description="G1" evidence="1">
    <location>
        <begin position="398"/>
        <end position="405"/>
    </location>
</feature>
<feature type="region of interest" description="G2" evidence="1">
    <location>
        <begin position="423"/>
        <end position="427"/>
    </location>
</feature>
<feature type="region of interest" description="G3" evidence="1">
    <location>
        <begin position="444"/>
        <end position="447"/>
    </location>
</feature>
<feature type="region of interest" description="G4" evidence="1">
    <location>
        <begin position="498"/>
        <end position="501"/>
    </location>
</feature>
<feature type="region of interest" description="G5" evidence="1">
    <location>
        <begin position="534"/>
        <end position="536"/>
    </location>
</feature>
<feature type="compositionally biased region" description="Basic and acidic residues" evidence="3">
    <location>
        <begin position="52"/>
        <end position="61"/>
    </location>
</feature>
<feature type="compositionally biased region" description="Basic and acidic residues" evidence="3">
    <location>
        <begin position="214"/>
        <end position="241"/>
    </location>
</feature>
<feature type="compositionally biased region" description="Basic and acidic residues" evidence="3">
    <location>
        <begin position="252"/>
        <end position="263"/>
    </location>
</feature>
<feature type="binding site" evidence="2">
    <location>
        <begin position="398"/>
        <end position="405"/>
    </location>
    <ligand>
        <name>GTP</name>
        <dbReference type="ChEBI" id="CHEBI:37565"/>
    </ligand>
</feature>
<feature type="binding site" evidence="2">
    <location>
        <begin position="444"/>
        <end position="448"/>
    </location>
    <ligand>
        <name>GTP</name>
        <dbReference type="ChEBI" id="CHEBI:37565"/>
    </ligand>
</feature>
<feature type="binding site" evidence="2">
    <location>
        <begin position="498"/>
        <end position="501"/>
    </location>
    <ligand>
        <name>GTP</name>
        <dbReference type="ChEBI" id="CHEBI:37565"/>
    </ligand>
</feature>
<proteinExistence type="inferred from homology"/>
<sequence length="889" mass="95680">MADITVAELAKEIGTPVDRLVTQLADSGVNKSATDAISQDEKEALLGHLKKQHGDESEAKPNKLTLNRKTKSTLTMGHGSKAKSVNVEVRKKRTYVKRSEVEDEKLAEEAAKAEAEAAILAEADAKAKAEAAAKEAENEKGVAAAKAEVEAERKAEAKIEAAAKAKIAAVEKAKNVEQAPEKVAETEEAKKLRLAQEKETLAKVEAEAAAAAEAAKKLAEENEGRWKEQEAERKAKEKEVVHLTSSVYAQEAEDKSDSADESGRRRKKKKAPDRNARGRNSGRGKGKTLSSPQSLKHGFTKPVETKLQDIRIGETISVAELANKMSKKGAEVVKAMFKLGAMATINQVIDQETAALVAEDMGFEVVLVKENALEEAVLADRNDTGEEITRAPVVTIMGHVDHGKTSLLDHIREAKVADGEAGGITQHIGAYHVETGHGMITFLDTPGHAAFTAMRSRGAKATDIVVIVVAADDGVMPQTIEAIQHAQASEAPIIIAVNKMDKESADPDRVKSELSQHGVLSEEWGGEVQFCHVSAKTGLGIDELLDSILLQSEVLELTAVVDKMANGVVVESKLDKGRGPVATVLVQEGTLKQGDIVLCGLEYGRVRAMRDENGKTIQSAGPSIPVEIIGLSGVPISGDEATVVKDEKKAREVALFRQGKFRDVKLARQQKAKLENMFASMAEGDISEVNVVIKSDVQGSLEAISDSLLKLSTDEVKVKIIGSGVGAITETDATLAAASNAIVVGFNVRADASARKVIESENIDLRYYSVIYALIEEVKQAMSGMLAPEFKQEIIGLAQVRDVFKSPKIGAIAGCMVTEGVIKRSAPIRVLRENVVIYEGELESLRRFKDDVQEVRNGTECGIGVKNYNDVRVGDQIEVFETIEIKRSL</sequence>
<comment type="function">
    <text evidence="2">One of the essential components for the initiation of protein synthesis. Protects formylmethionyl-tRNA from spontaneous hydrolysis and promotes its binding to the 30S ribosomal subunits. Also involved in the hydrolysis of GTP during the formation of the 70S ribosomal complex.</text>
</comment>
<comment type="subcellular location">
    <subcellularLocation>
        <location evidence="2">Cytoplasm</location>
    </subcellularLocation>
</comment>
<comment type="similarity">
    <text evidence="2">Belongs to the TRAFAC class translation factor GTPase superfamily. Classic translation factor GTPase family. IF-2 subfamily.</text>
</comment>
<evidence type="ECO:0000250" key="1"/>
<evidence type="ECO:0000255" key="2">
    <source>
        <dbReference type="HAMAP-Rule" id="MF_00100"/>
    </source>
</evidence>
<evidence type="ECO:0000256" key="3">
    <source>
        <dbReference type="SAM" id="MobiDB-lite"/>
    </source>
</evidence>
<protein>
    <recommendedName>
        <fullName evidence="2">Translation initiation factor IF-2</fullName>
    </recommendedName>
</protein>
<accession>Q482T9</accession>
<name>IF2_COLP3</name>
<organism>
    <name type="scientific">Colwellia psychrerythraea (strain 34H / ATCC BAA-681)</name>
    <name type="common">Vibrio psychroerythus</name>
    <dbReference type="NCBI Taxonomy" id="167879"/>
    <lineage>
        <taxon>Bacteria</taxon>
        <taxon>Pseudomonadati</taxon>
        <taxon>Pseudomonadota</taxon>
        <taxon>Gammaproteobacteria</taxon>
        <taxon>Alteromonadales</taxon>
        <taxon>Colwelliaceae</taxon>
        <taxon>Colwellia</taxon>
    </lineage>
</organism>
<reference key="1">
    <citation type="journal article" date="2005" name="Proc. Natl. Acad. Sci. U.S.A.">
        <title>The psychrophilic lifestyle as revealed by the genome sequence of Colwellia psychrerythraea 34H through genomic and proteomic analyses.</title>
        <authorList>
            <person name="Methe B.A."/>
            <person name="Nelson K.E."/>
            <person name="Deming J.W."/>
            <person name="Momen B."/>
            <person name="Melamud E."/>
            <person name="Zhang X."/>
            <person name="Moult J."/>
            <person name="Madupu R."/>
            <person name="Nelson W.C."/>
            <person name="Dodson R.J."/>
            <person name="Brinkac L.M."/>
            <person name="Daugherty S.C."/>
            <person name="Durkin A.S."/>
            <person name="DeBoy R.T."/>
            <person name="Kolonay J.F."/>
            <person name="Sullivan S.A."/>
            <person name="Zhou L."/>
            <person name="Davidsen T.M."/>
            <person name="Wu M."/>
            <person name="Huston A.L."/>
            <person name="Lewis M."/>
            <person name="Weaver B."/>
            <person name="Weidman J.F."/>
            <person name="Khouri H."/>
            <person name="Utterback T.R."/>
            <person name="Feldblyum T.V."/>
            <person name="Fraser C.M."/>
        </authorList>
    </citation>
    <scope>NUCLEOTIDE SEQUENCE [LARGE SCALE GENOMIC DNA]</scope>
    <source>
        <strain>34H / ATCC BAA-681</strain>
    </source>
</reference>
<gene>
    <name evidence="2" type="primary">infB</name>
    <name type="ordered locus">CPS_2203</name>
</gene>